<proteinExistence type="inferred from homology"/>
<sequence length="254" mass="27635">MNSQFAGLTREACVALLASYPLSVGILAGQWIALHRYLQQLEALNQPLLHLDLMDGQFCPQFTVGPWAVGQLPQTFIKDVHLMVADQWTAAQACVKAGAHCITLQAEGDIHLHHTLSWLGQQTVPVIGGEMPVIRGISLCPATPLDVIIPILSDVEVIQLLAVNPGYGSKMRSSDLHERVAQLLCLLGDKREGKIIVIDGSLTQDQLPSLIAQGIDRVVSGSALFRDDRLVENTRSWRAMFKVAGDTTFLPSTA</sequence>
<protein>
    <recommendedName>
        <fullName>Putative epimerase LsrE</fullName>
        <ecNumber evidence="1">5.1.3.-</ecNumber>
    </recommendedName>
</protein>
<keyword id="KW-1003">Cell membrane</keyword>
<keyword id="KW-0413">Isomerase</keyword>
<keyword id="KW-0472">Membrane</keyword>
<keyword id="KW-0479">Metal-binding</keyword>
<keyword id="KW-0812">Transmembrane</keyword>
<keyword id="KW-1133">Transmembrane helix</keyword>
<evidence type="ECO:0000250" key="1">
    <source>
        <dbReference type="UniProtKB" id="P32719"/>
    </source>
</evidence>
<evidence type="ECO:0000255" key="2"/>
<evidence type="ECO:0000305" key="3"/>
<reference key="1">
    <citation type="journal article" date="2005" name="Nucleic Acids Res.">
        <title>The genome sequence of Salmonella enterica serovar Choleraesuis, a highly invasive and resistant zoonotic pathogen.</title>
        <authorList>
            <person name="Chiu C.-H."/>
            <person name="Tang P."/>
            <person name="Chu C."/>
            <person name="Hu S."/>
            <person name="Bao Q."/>
            <person name="Yu J."/>
            <person name="Chou Y.-Y."/>
            <person name="Wang H.-S."/>
            <person name="Lee Y.-S."/>
        </authorList>
    </citation>
    <scope>NUCLEOTIDE SEQUENCE [LARGE SCALE GENOMIC DNA]</scope>
    <source>
        <strain>SC-B67</strain>
    </source>
</reference>
<name>LSRE_SALCH</name>
<accession>Q57HD7</accession>
<gene>
    <name type="primary">lsrE</name>
    <name type="ordered locus">SCH_3969</name>
</gene>
<dbReference type="EC" id="5.1.3.-" evidence="1"/>
<dbReference type="EMBL" id="AE017220">
    <property type="protein sequence ID" value="AAX67875.1"/>
    <property type="molecule type" value="Genomic_DNA"/>
</dbReference>
<dbReference type="RefSeq" id="WP_001088049.1">
    <property type="nucleotide sequence ID" value="NC_006905.1"/>
</dbReference>
<dbReference type="SMR" id="Q57HD7"/>
<dbReference type="KEGG" id="sec:SCH_3969"/>
<dbReference type="HOGENOM" id="CLU_054856_3_0_6"/>
<dbReference type="Proteomes" id="UP000000538">
    <property type="component" value="Chromosome"/>
</dbReference>
<dbReference type="GO" id="GO:0005886">
    <property type="term" value="C:plasma membrane"/>
    <property type="evidence" value="ECO:0007669"/>
    <property type="project" value="UniProtKB-SubCell"/>
</dbReference>
<dbReference type="GO" id="GO:0046872">
    <property type="term" value="F:metal ion binding"/>
    <property type="evidence" value="ECO:0007669"/>
    <property type="project" value="UniProtKB-KW"/>
</dbReference>
<dbReference type="GO" id="GO:0016857">
    <property type="term" value="F:racemase and epimerase activity, acting on carbohydrates and derivatives"/>
    <property type="evidence" value="ECO:0007669"/>
    <property type="project" value="InterPro"/>
</dbReference>
<dbReference type="GO" id="GO:0005975">
    <property type="term" value="P:carbohydrate metabolic process"/>
    <property type="evidence" value="ECO:0007669"/>
    <property type="project" value="InterPro"/>
</dbReference>
<dbReference type="CDD" id="cd00429">
    <property type="entry name" value="RPE"/>
    <property type="match status" value="1"/>
</dbReference>
<dbReference type="FunFam" id="3.20.20.70:FF:000180">
    <property type="entry name" value="Epimerase"/>
    <property type="match status" value="1"/>
</dbReference>
<dbReference type="Gene3D" id="3.20.20.70">
    <property type="entry name" value="Aldolase class I"/>
    <property type="match status" value="1"/>
</dbReference>
<dbReference type="InterPro" id="IPR013785">
    <property type="entry name" value="Aldolase_TIM"/>
</dbReference>
<dbReference type="InterPro" id="IPR000056">
    <property type="entry name" value="Ribul_P_3_epim-like"/>
</dbReference>
<dbReference type="InterPro" id="IPR011060">
    <property type="entry name" value="RibuloseP-bd_barrel"/>
</dbReference>
<dbReference type="NCBIfam" id="NF010658">
    <property type="entry name" value="PRK14057.1"/>
    <property type="match status" value="1"/>
</dbReference>
<dbReference type="PANTHER" id="PTHR11749">
    <property type="entry name" value="RIBULOSE-5-PHOSPHATE-3-EPIMERASE"/>
    <property type="match status" value="1"/>
</dbReference>
<dbReference type="Pfam" id="PF00834">
    <property type="entry name" value="Ribul_P_3_epim"/>
    <property type="match status" value="1"/>
</dbReference>
<dbReference type="SUPFAM" id="SSF51366">
    <property type="entry name" value="Ribulose-phoshate binding barrel"/>
    <property type="match status" value="1"/>
</dbReference>
<feature type="chain" id="PRO_0000351557" description="Putative epimerase LsrE">
    <location>
        <begin position="1"/>
        <end position="254"/>
    </location>
</feature>
<feature type="transmembrane region" description="Helical" evidence="2">
    <location>
        <begin position="14"/>
        <end position="34"/>
    </location>
</feature>
<feature type="active site" description="Proton acceptor" evidence="1">
    <location>
        <position position="52"/>
    </location>
</feature>
<feature type="active site" description="Proton donor" evidence="1">
    <location>
        <position position="199"/>
    </location>
</feature>
<feature type="binding site" evidence="1">
    <location>
        <position position="50"/>
    </location>
    <ligand>
        <name>a divalent metal cation</name>
        <dbReference type="ChEBI" id="CHEBI:60240"/>
    </ligand>
</feature>
<feature type="binding site" evidence="1">
    <location>
        <position position="52"/>
    </location>
    <ligand>
        <name>a divalent metal cation</name>
        <dbReference type="ChEBI" id="CHEBI:60240"/>
    </ligand>
</feature>
<feature type="binding site" evidence="1">
    <location>
        <position position="81"/>
    </location>
    <ligand>
        <name>a divalent metal cation</name>
        <dbReference type="ChEBI" id="CHEBI:60240"/>
    </ligand>
</feature>
<feature type="binding site" evidence="1">
    <location>
        <position position="81"/>
    </location>
    <ligand>
        <name>substrate</name>
    </ligand>
</feature>
<feature type="binding site" evidence="1">
    <location>
        <begin position="166"/>
        <end position="169"/>
    </location>
    <ligand>
        <name>substrate</name>
    </ligand>
</feature>
<feature type="binding site" evidence="1">
    <location>
        <begin position="199"/>
        <end position="201"/>
    </location>
    <ligand>
        <name>substrate</name>
    </ligand>
</feature>
<feature type="binding site" evidence="1">
    <location>
        <position position="199"/>
    </location>
    <ligand>
        <name>a divalent metal cation</name>
        <dbReference type="ChEBI" id="CHEBI:60240"/>
    </ligand>
</feature>
<feature type="binding site" evidence="1">
    <location>
        <begin position="221"/>
        <end position="222"/>
    </location>
    <ligand>
        <name>substrate</name>
    </ligand>
</feature>
<organism>
    <name type="scientific">Salmonella choleraesuis (strain SC-B67)</name>
    <dbReference type="NCBI Taxonomy" id="321314"/>
    <lineage>
        <taxon>Bacteria</taxon>
        <taxon>Pseudomonadati</taxon>
        <taxon>Pseudomonadota</taxon>
        <taxon>Gammaproteobacteria</taxon>
        <taxon>Enterobacterales</taxon>
        <taxon>Enterobacteriaceae</taxon>
        <taxon>Salmonella</taxon>
    </lineage>
</organism>
<comment type="cofactor">
    <cofactor evidence="1">
        <name>a divalent metal cation</name>
        <dbReference type="ChEBI" id="CHEBI:60240"/>
    </cofactor>
    <text evidence="1">Binds 1 divalent metal cation per subunit.</text>
</comment>
<comment type="subcellular location">
    <subcellularLocation>
        <location evidence="3">Cell membrane</location>
        <topology evidence="3">Single-pass membrane protein</topology>
    </subcellularLocation>
</comment>
<comment type="similarity">
    <text evidence="3">Belongs to the ribulose-phosphate 3-epimerase family.</text>
</comment>